<protein>
    <recommendedName>
        <fullName>Intelectin-1</fullName>
        <shortName>ITLN-1</shortName>
    </recommendedName>
    <alternativeName>
        <fullName>Endothelial lectin HL-1</fullName>
    </alternativeName>
    <alternativeName>
        <fullName>Galactofuranose-binding lectin</fullName>
    </alternativeName>
    <alternativeName>
        <fullName evidence="13">Intestinal lactoferrin receptor</fullName>
    </alternativeName>
    <alternativeName>
        <fullName evidence="14">Omentin</fullName>
    </alternativeName>
</protein>
<keyword id="KW-0002">3D-structure</keyword>
<keyword id="KW-0106">Calcium</keyword>
<keyword id="KW-1003">Cell membrane</keyword>
<keyword id="KW-0903">Direct protein sequencing</keyword>
<keyword id="KW-1015">Disulfide bond</keyword>
<keyword id="KW-0325">Glycoprotein</keyword>
<keyword id="KW-0336">GPI-anchor</keyword>
<keyword id="KW-0430">Lectin</keyword>
<keyword id="KW-0449">Lipoprotein</keyword>
<keyword id="KW-0472">Membrane</keyword>
<keyword id="KW-0479">Metal-binding</keyword>
<keyword id="KW-1267">Proteomics identification</keyword>
<keyword id="KW-1185">Reference proteome</keyword>
<keyword id="KW-0964">Secreted</keyword>
<keyword id="KW-0732">Signal</keyword>
<reference key="1">
    <citation type="journal article" date="2001" name="Biochemistry">
        <title>Molecular cloning and functional expression of a human intestinal lactoferrin receptor.</title>
        <authorList>
            <person name="Suzuki Y.A."/>
            <person name="Shin K."/>
            <person name="Loennerdal B."/>
        </authorList>
    </citation>
    <scope>NUCLEOTIDE SEQUENCE [MRNA]</scope>
    <scope>FUNCTION</scope>
    <scope>INTERACTION WITH LTF</scope>
    <scope>PUTATIVE GPI-ANCHOR</scope>
    <scope>TISSUE SPECIFICITY</scope>
    <scope>SUBCELLULAR LOCATION</scope>
    <source>
        <tissue>Small intestine</tissue>
    </source>
</reference>
<reference key="2">
    <citation type="journal article" date="2001" name="Glycobiology">
        <title>Human homologs of the Xenopus oocyte cortical granule lectin XL35.</title>
        <authorList>
            <person name="Lee J.K."/>
            <person name="Schnee J."/>
            <person name="Pang M."/>
            <person name="Wolfert M."/>
            <person name="Baum L.G."/>
            <person name="Moremen K.W."/>
            <person name="Pierce M."/>
        </authorList>
    </citation>
    <scope>NUCLEOTIDE SEQUENCE [MRNA]</scope>
    <scope>TISSUE SPECIFICITY</scope>
    <source>
        <tissue>Small intestine</tissue>
    </source>
</reference>
<reference key="3">
    <citation type="journal article" date="2001" name="J. Biol. Chem.">
        <title>Human intelectin is a novel soluble lectin that recognizes galactofuranose in carbohydrate chains of bacterial cell wall.</title>
        <authorList>
            <person name="Tsuji S."/>
            <person name="Uehori J."/>
            <person name="Matsumoto M."/>
            <person name="Suzuki Y."/>
            <person name="Matsuhisa A."/>
            <person name="Toyoshima K."/>
            <person name="Seya T."/>
        </authorList>
    </citation>
    <scope>NUCLEOTIDE SEQUENCE [MRNA]</scope>
    <scope>PROTEIN SEQUENCE OF 19-28</scope>
    <scope>FUNCTION</scope>
    <scope>SUBCELLULAR LOCATION</scope>
    <scope>TISSUE SPECIFICITY</scope>
    <scope>SUBUNIT</scope>
    <scope>GLYCOSYLATION</scope>
    <scope>VARIANT ASP-109</scope>
    <source>
        <tissue>Placenta</tissue>
    </source>
</reference>
<reference key="4">
    <citation type="journal article" date="2004" name="Comp. Biochem. Physiol.">
        <title>The Xenopus laevis cortical granule lectin: cDNA cloning, developmental expression, and identification of the eglectin family of lectins.</title>
        <authorList>
            <person name="Chang B.Y."/>
            <person name="Peavy T.R."/>
            <person name="Wardrip N.J."/>
            <person name="Hedrick J.L."/>
        </authorList>
    </citation>
    <scope>NUCLEOTIDE SEQUENCE [MRNA]</scope>
    <scope>VARIANT PRO-313</scope>
</reference>
<reference key="5">
    <citation type="journal article" date="2006" name="Am. J. Physiol.">
        <title>Identification of omentin as a novel depot-specific adipokine in human adipose tissue: possible role in modulating insulin action.</title>
        <authorList>
            <person name="Yang R.-Z."/>
            <person name="Lee M.-J."/>
            <person name="Hu H."/>
            <person name="Pray J."/>
            <person name="Wu H.-B."/>
            <person name="Hansen B.C."/>
            <person name="Shuldiner A.R."/>
            <person name="Fried S.K."/>
            <person name="McLenithan J.C."/>
            <person name="Gong D.-W."/>
        </authorList>
    </citation>
    <scope>NUCLEOTIDE SEQUENCE [MRNA]</scope>
    <scope>FUNCTION</scope>
    <scope>SUBCELLULAR LOCATION</scope>
    <scope>TISSUE SPECIFICITY</scope>
    <source>
        <tissue>Adipose tissue</tissue>
    </source>
</reference>
<reference key="6">
    <citation type="submission" date="2004-05" db="EMBL/GenBank/DDBJ databases">
        <title>Human homolog of the Xenopus laevis egg cortical granule lectin.</title>
        <authorList>
            <person name="Peavy T.R."/>
            <person name="Hedrick J.L."/>
        </authorList>
    </citation>
    <scope>NUCLEOTIDE SEQUENCE [MRNA]</scope>
    <scope>VARIANT PRO-313</scope>
    <source>
        <tissue>Ovary</tissue>
    </source>
</reference>
<reference key="7">
    <citation type="journal article" date="2003" name="Genome Res.">
        <title>The secreted protein discovery initiative (SPDI), a large-scale effort to identify novel human secreted and transmembrane proteins: a bioinformatics assessment.</title>
        <authorList>
            <person name="Clark H.F."/>
            <person name="Gurney A.L."/>
            <person name="Abaya E."/>
            <person name="Baker K."/>
            <person name="Baldwin D.T."/>
            <person name="Brush J."/>
            <person name="Chen J."/>
            <person name="Chow B."/>
            <person name="Chui C."/>
            <person name="Crowley C."/>
            <person name="Currell B."/>
            <person name="Deuel B."/>
            <person name="Dowd P."/>
            <person name="Eaton D."/>
            <person name="Foster J.S."/>
            <person name="Grimaldi C."/>
            <person name="Gu Q."/>
            <person name="Hass P.E."/>
            <person name="Heldens S."/>
            <person name="Huang A."/>
            <person name="Kim H.S."/>
            <person name="Klimowski L."/>
            <person name="Jin Y."/>
            <person name="Johnson S."/>
            <person name="Lee J."/>
            <person name="Lewis L."/>
            <person name="Liao D."/>
            <person name="Mark M.R."/>
            <person name="Robbie E."/>
            <person name="Sanchez C."/>
            <person name="Schoenfeld J."/>
            <person name="Seshagiri S."/>
            <person name="Simmons L."/>
            <person name="Singh J."/>
            <person name="Smith V."/>
            <person name="Stinson J."/>
            <person name="Vagts A."/>
            <person name="Vandlen R.L."/>
            <person name="Watanabe C."/>
            <person name="Wieand D."/>
            <person name="Woods K."/>
            <person name="Xie M.-H."/>
            <person name="Yansura D.G."/>
            <person name="Yi S."/>
            <person name="Yu G."/>
            <person name="Yuan J."/>
            <person name="Zhang M."/>
            <person name="Zhang Z."/>
            <person name="Goddard A.D."/>
            <person name="Wood W.I."/>
            <person name="Godowski P.J."/>
            <person name="Gray A.M."/>
        </authorList>
    </citation>
    <scope>NUCLEOTIDE SEQUENCE [LARGE SCALE MRNA]</scope>
</reference>
<reference key="8">
    <citation type="journal article" date="2004" name="Nat. Genet.">
        <title>Complete sequencing and characterization of 21,243 full-length human cDNAs.</title>
        <authorList>
            <person name="Ota T."/>
            <person name="Suzuki Y."/>
            <person name="Nishikawa T."/>
            <person name="Otsuki T."/>
            <person name="Sugiyama T."/>
            <person name="Irie R."/>
            <person name="Wakamatsu A."/>
            <person name="Hayashi K."/>
            <person name="Sato H."/>
            <person name="Nagai K."/>
            <person name="Kimura K."/>
            <person name="Makita H."/>
            <person name="Sekine M."/>
            <person name="Obayashi M."/>
            <person name="Nishi T."/>
            <person name="Shibahara T."/>
            <person name="Tanaka T."/>
            <person name="Ishii S."/>
            <person name="Yamamoto J."/>
            <person name="Saito K."/>
            <person name="Kawai Y."/>
            <person name="Isono Y."/>
            <person name="Nakamura Y."/>
            <person name="Nagahari K."/>
            <person name="Murakami K."/>
            <person name="Yasuda T."/>
            <person name="Iwayanagi T."/>
            <person name="Wagatsuma M."/>
            <person name="Shiratori A."/>
            <person name="Sudo H."/>
            <person name="Hosoiri T."/>
            <person name="Kaku Y."/>
            <person name="Kodaira H."/>
            <person name="Kondo H."/>
            <person name="Sugawara M."/>
            <person name="Takahashi M."/>
            <person name="Kanda K."/>
            <person name="Yokoi T."/>
            <person name="Furuya T."/>
            <person name="Kikkawa E."/>
            <person name="Omura Y."/>
            <person name="Abe K."/>
            <person name="Kamihara K."/>
            <person name="Katsuta N."/>
            <person name="Sato K."/>
            <person name="Tanikawa M."/>
            <person name="Yamazaki M."/>
            <person name="Ninomiya K."/>
            <person name="Ishibashi T."/>
            <person name="Yamashita H."/>
            <person name="Murakawa K."/>
            <person name="Fujimori K."/>
            <person name="Tanai H."/>
            <person name="Kimata M."/>
            <person name="Watanabe M."/>
            <person name="Hiraoka S."/>
            <person name="Chiba Y."/>
            <person name="Ishida S."/>
            <person name="Ono Y."/>
            <person name="Takiguchi S."/>
            <person name="Watanabe S."/>
            <person name="Yosida M."/>
            <person name="Hotuta T."/>
            <person name="Kusano J."/>
            <person name="Kanehori K."/>
            <person name="Takahashi-Fujii A."/>
            <person name="Hara H."/>
            <person name="Tanase T.-O."/>
            <person name="Nomura Y."/>
            <person name="Togiya S."/>
            <person name="Komai F."/>
            <person name="Hara R."/>
            <person name="Takeuchi K."/>
            <person name="Arita M."/>
            <person name="Imose N."/>
            <person name="Musashino K."/>
            <person name="Yuuki H."/>
            <person name="Oshima A."/>
            <person name="Sasaki N."/>
            <person name="Aotsuka S."/>
            <person name="Yoshikawa Y."/>
            <person name="Matsunawa H."/>
            <person name="Ichihara T."/>
            <person name="Shiohata N."/>
            <person name="Sano S."/>
            <person name="Moriya S."/>
            <person name="Momiyama H."/>
            <person name="Satoh N."/>
            <person name="Takami S."/>
            <person name="Terashima Y."/>
            <person name="Suzuki O."/>
            <person name="Nakagawa S."/>
            <person name="Senoh A."/>
            <person name="Mizoguchi H."/>
            <person name="Goto Y."/>
            <person name="Shimizu F."/>
            <person name="Wakebe H."/>
            <person name="Hishigaki H."/>
            <person name="Watanabe T."/>
            <person name="Sugiyama A."/>
            <person name="Takemoto M."/>
            <person name="Kawakami B."/>
            <person name="Yamazaki M."/>
            <person name="Watanabe K."/>
            <person name="Kumagai A."/>
            <person name="Itakura S."/>
            <person name="Fukuzumi Y."/>
            <person name="Fujimori Y."/>
            <person name="Komiyama M."/>
            <person name="Tashiro H."/>
            <person name="Tanigami A."/>
            <person name="Fujiwara T."/>
            <person name="Ono T."/>
            <person name="Yamada K."/>
            <person name="Fujii Y."/>
            <person name="Ozaki K."/>
            <person name="Hirao M."/>
            <person name="Ohmori Y."/>
            <person name="Kawabata A."/>
            <person name="Hikiji T."/>
            <person name="Kobatake N."/>
            <person name="Inagaki H."/>
            <person name="Ikema Y."/>
            <person name="Okamoto S."/>
            <person name="Okitani R."/>
            <person name="Kawakami T."/>
            <person name="Noguchi S."/>
            <person name="Itoh T."/>
            <person name="Shigeta K."/>
            <person name="Senba T."/>
            <person name="Matsumura K."/>
            <person name="Nakajima Y."/>
            <person name="Mizuno T."/>
            <person name="Morinaga M."/>
            <person name="Sasaki M."/>
            <person name="Togashi T."/>
            <person name="Oyama M."/>
            <person name="Hata H."/>
            <person name="Watanabe M."/>
            <person name="Komatsu T."/>
            <person name="Mizushima-Sugano J."/>
            <person name="Satoh T."/>
            <person name="Shirai Y."/>
            <person name="Takahashi Y."/>
            <person name="Nakagawa K."/>
            <person name="Okumura K."/>
            <person name="Nagase T."/>
            <person name="Nomura N."/>
            <person name="Kikuchi H."/>
            <person name="Masuho Y."/>
            <person name="Yamashita R."/>
            <person name="Nakai K."/>
            <person name="Yada T."/>
            <person name="Nakamura Y."/>
            <person name="Ohara O."/>
            <person name="Isogai T."/>
            <person name="Sugano S."/>
        </authorList>
    </citation>
    <scope>NUCLEOTIDE SEQUENCE [LARGE SCALE MRNA]</scope>
    <source>
        <tissue>Adipose tissue</tissue>
    </source>
</reference>
<reference key="9">
    <citation type="submission" date="2004-06" db="EMBL/GenBank/DDBJ databases">
        <title>Cloning of human full open reading frames in Gateway(TM) system entry vector (pDONR201).</title>
        <authorList>
            <person name="Ebert L."/>
            <person name="Schick M."/>
            <person name="Neubert P."/>
            <person name="Schatten R."/>
            <person name="Henze S."/>
            <person name="Korn B."/>
        </authorList>
    </citation>
    <scope>NUCLEOTIDE SEQUENCE [LARGE SCALE MRNA]</scope>
</reference>
<reference key="10">
    <citation type="journal article" date="2006" name="Nature">
        <title>The DNA sequence and biological annotation of human chromosome 1.</title>
        <authorList>
            <person name="Gregory S.G."/>
            <person name="Barlow K.F."/>
            <person name="McLay K.E."/>
            <person name="Kaul R."/>
            <person name="Swarbreck D."/>
            <person name="Dunham A."/>
            <person name="Scott C.E."/>
            <person name="Howe K.L."/>
            <person name="Woodfine K."/>
            <person name="Spencer C.C.A."/>
            <person name="Jones M.C."/>
            <person name="Gillson C."/>
            <person name="Searle S."/>
            <person name="Zhou Y."/>
            <person name="Kokocinski F."/>
            <person name="McDonald L."/>
            <person name="Evans R."/>
            <person name="Phillips K."/>
            <person name="Atkinson A."/>
            <person name="Cooper R."/>
            <person name="Jones C."/>
            <person name="Hall R.E."/>
            <person name="Andrews T.D."/>
            <person name="Lloyd C."/>
            <person name="Ainscough R."/>
            <person name="Almeida J.P."/>
            <person name="Ambrose K.D."/>
            <person name="Anderson F."/>
            <person name="Andrew R.W."/>
            <person name="Ashwell R.I.S."/>
            <person name="Aubin K."/>
            <person name="Babbage A.K."/>
            <person name="Bagguley C.L."/>
            <person name="Bailey J."/>
            <person name="Beasley H."/>
            <person name="Bethel G."/>
            <person name="Bird C.P."/>
            <person name="Bray-Allen S."/>
            <person name="Brown J.Y."/>
            <person name="Brown A.J."/>
            <person name="Buckley D."/>
            <person name="Burton J."/>
            <person name="Bye J."/>
            <person name="Carder C."/>
            <person name="Chapman J.C."/>
            <person name="Clark S.Y."/>
            <person name="Clarke G."/>
            <person name="Clee C."/>
            <person name="Cobley V."/>
            <person name="Collier R.E."/>
            <person name="Corby N."/>
            <person name="Coville G.J."/>
            <person name="Davies J."/>
            <person name="Deadman R."/>
            <person name="Dunn M."/>
            <person name="Earthrowl M."/>
            <person name="Ellington A.G."/>
            <person name="Errington H."/>
            <person name="Frankish A."/>
            <person name="Frankland J."/>
            <person name="French L."/>
            <person name="Garner P."/>
            <person name="Garnett J."/>
            <person name="Gay L."/>
            <person name="Ghori M.R.J."/>
            <person name="Gibson R."/>
            <person name="Gilby L.M."/>
            <person name="Gillett W."/>
            <person name="Glithero R.J."/>
            <person name="Grafham D.V."/>
            <person name="Griffiths C."/>
            <person name="Griffiths-Jones S."/>
            <person name="Grocock R."/>
            <person name="Hammond S."/>
            <person name="Harrison E.S.I."/>
            <person name="Hart E."/>
            <person name="Haugen E."/>
            <person name="Heath P.D."/>
            <person name="Holmes S."/>
            <person name="Holt K."/>
            <person name="Howden P.J."/>
            <person name="Hunt A.R."/>
            <person name="Hunt S.E."/>
            <person name="Hunter G."/>
            <person name="Isherwood J."/>
            <person name="James R."/>
            <person name="Johnson C."/>
            <person name="Johnson D."/>
            <person name="Joy A."/>
            <person name="Kay M."/>
            <person name="Kershaw J.K."/>
            <person name="Kibukawa M."/>
            <person name="Kimberley A.M."/>
            <person name="King A."/>
            <person name="Knights A.J."/>
            <person name="Lad H."/>
            <person name="Laird G."/>
            <person name="Lawlor S."/>
            <person name="Leongamornlert D.A."/>
            <person name="Lloyd D.M."/>
            <person name="Loveland J."/>
            <person name="Lovell J."/>
            <person name="Lush M.J."/>
            <person name="Lyne R."/>
            <person name="Martin S."/>
            <person name="Mashreghi-Mohammadi M."/>
            <person name="Matthews L."/>
            <person name="Matthews N.S.W."/>
            <person name="McLaren S."/>
            <person name="Milne S."/>
            <person name="Mistry S."/>
            <person name="Moore M.J.F."/>
            <person name="Nickerson T."/>
            <person name="O'Dell C.N."/>
            <person name="Oliver K."/>
            <person name="Palmeiri A."/>
            <person name="Palmer S.A."/>
            <person name="Parker A."/>
            <person name="Patel D."/>
            <person name="Pearce A.V."/>
            <person name="Peck A.I."/>
            <person name="Pelan S."/>
            <person name="Phelps K."/>
            <person name="Phillimore B.J."/>
            <person name="Plumb R."/>
            <person name="Rajan J."/>
            <person name="Raymond C."/>
            <person name="Rouse G."/>
            <person name="Saenphimmachak C."/>
            <person name="Sehra H.K."/>
            <person name="Sheridan E."/>
            <person name="Shownkeen R."/>
            <person name="Sims S."/>
            <person name="Skuce C.D."/>
            <person name="Smith M."/>
            <person name="Steward C."/>
            <person name="Subramanian S."/>
            <person name="Sycamore N."/>
            <person name="Tracey A."/>
            <person name="Tromans A."/>
            <person name="Van Helmond Z."/>
            <person name="Wall M."/>
            <person name="Wallis J.M."/>
            <person name="White S."/>
            <person name="Whitehead S.L."/>
            <person name="Wilkinson J.E."/>
            <person name="Willey D.L."/>
            <person name="Williams H."/>
            <person name="Wilming L."/>
            <person name="Wray P.W."/>
            <person name="Wu Z."/>
            <person name="Coulson A."/>
            <person name="Vaudin M."/>
            <person name="Sulston J.E."/>
            <person name="Durbin R.M."/>
            <person name="Hubbard T."/>
            <person name="Wooster R."/>
            <person name="Dunham I."/>
            <person name="Carter N.P."/>
            <person name="McVean G."/>
            <person name="Ross M.T."/>
            <person name="Harrow J."/>
            <person name="Olson M.V."/>
            <person name="Beck S."/>
            <person name="Rogers J."/>
            <person name="Bentley D.R."/>
        </authorList>
    </citation>
    <scope>NUCLEOTIDE SEQUENCE [LARGE SCALE GENOMIC DNA]</scope>
</reference>
<reference key="11">
    <citation type="submission" date="2005-09" db="EMBL/GenBank/DDBJ databases">
        <authorList>
            <person name="Mural R.J."/>
            <person name="Istrail S."/>
            <person name="Sutton G.G."/>
            <person name="Florea L."/>
            <person name="Halpern A.L."/>
            <person name="Mobarry C.M."/>
            <person name="Lippert R."/>
            <person name="Walenz B."/>
            <person name="Shatkay H."/>
            <person name="Dew I."/>
            <person name="Miller J.R."/>
            <person name="Flanigan M.J."/>
            <person name="Edwards N.J."/>
            <person name="Bolanos R."/>
            <person name="Fasulo D."/>
            <person name="Halldorsson B.V."/>
            <person name="Hannenhalli S."/>
            <person name="Turner R."/>
            <person name="Yooseph S."/>
            <person name="Lu F."/>
            <person name="Nusskern D.R."/>
            <person name="Shue B.C."/>
            <person name="Zheng X.H."/>
            <person name="Zhong F."/>
            <person name="Delcher A.L."/>
            <person name="Huson D.H."/>
            <person name="Kravitz S.A."/>
            <person name="Mouchard L."/>
            <person name="Reinert K."/>
            <person name="Remington K.A."/>
            <person name="Clark A.G."/>
            <person name="Waterman M.S."/>
            <person name="Eichler E.E."/>
            <person name="Adams M.D."/>
            <person name="Hunkapiller M.W."/>
            <person name="Myers E.W."/>
            <person name="Venter J.C."/>
        </authorList>
    </citation>
    <scope>NUCLEOTIDE SEQUENCE [LARGE SCALE GENOMIC DNA]</scope>
</reference>
<reference key="12">
    <citation type="journal article" date="2004" name="Genome Res.">
        <title>The status, quality, and expansion of the NIH full-length cDNA project: the Mammalian Gene Collection (MGC).</title>
        <authorList>
            <consortium name="The MGC Project Team"/>
        </authorList>
    </citation>
    <scope>NUCLEOTIDE SEQUENCE [LARGE SCALE MRNA]</scope>
    <source>
        <tissue>Lung</tissue>
    </source>
</reference>
<reference key="13">
    <citation type="journal article" date="2007" name="Glycobiology">
        <title>Differential structure and activity between human and mouse intelectin-1: human intelectin-1 is a disulfide-linked trimer, whereas mouse homologue is a monomer.</title>
        <authorList>
            <person name="Tsuji S."/>
            <person name="Yamashita M."/>
            <person name="Nishiyama A."/>
            <person name="Shinohara T."/>
            <person name="Li Z."/>
            <person name="Myrvik Q.N."/>
            <person name="Hoffman D.R."/>
            <person name="Henriksen R.A."/>
            <person name="Shibata Y."/>
        </authorList>
    </citation>
    <scope>SUBUNIT</scope>
    <scope>MASS SPECTROMETRY</scope>
    <scope>GLYCOSYLATION</scope>
    <scope>DISULFIDE BOND</scope>
    <scope>MUTAGENESIS OF CYS-31 AND CYS-48</scope>
</reference>
<reference key="14">
    <citation type="journal article" date="2013" name="J. Biochem.">
        <title>A lactoferrin-receptor, intelectin 1, affects uptake, sub-cellular localization and release of immunochemically detectable lactoferrin by intestinal epithelial Caco-2 cells.</title>
        <authorList>
            <person name="Akiyama Y."/>
            <person name="Oshima K."/>
            <person name="Kuhara T."/>
            <person name="Shin K."/>
            <person name="Abe F."/>
            <person name="Iwatsuki K."/>
            <person name="Nadano D."/>
            <person name="Matsuda T."/>
        </authorList>
    </citation>
    <scope>FUNCTION</scope>
    <scope>INTERACTION WITH LTF</scope>
</reference>
<reference evidence="17 18" key="15">
    <citation type="journal article" date="2015" name="Nat. Struct. Mol. Biol.">
        <title>Recognition of microbial glycans by human intelectin-1.</title>
        <authorList>
            <person name="Wesener D.A."/>
            <person name="Wangkanont K."/>
            <person name="McBride R."/>
            <person name="Song X."/>
            <person name="Kraft M.B."/>
            <person name="Hodges H.L."/>
            <person name="Zarling L.C."/>
            <person name="Splain R.A."/>
            <person name="Smith D.F."/>
            <person name="Cummings R.D."/>
            <person name="Paulson J.C."/>
            <person name="Forest K.T."/>
            <person name="Kiessling L.L."/>
        </authorList>
    </citation>
    <scope>X-RAY CRYSTALLOGRAPHY (1.60 ANGSTROMS) OF 29-313 IN COMPLEX WITH CALCIUM IONS AND CARBOHYDRATE</scope>
    <scope>FUNCTION</scope>
    <scope>DISULFIDE BONDS</scope>
    <scope>SUBUNIT</scope>
</reference>
<feature type="signal peptide" evidence="5 9">
    <location>
        <begin position="1"/>
        <end position="18"/>
    </location>
</feature>
<feature type="chain" id="PRO_0000009143" description="Intelectin-1">
    <location>
        <begin position="19"/>
        <end position="298"/>
    </location>
</feature>
<feature type="propeptide" id="PRO_0000009144" evidence="2">
    <location>
        <begin position="299"/>
        <end position="313"/>
    </location>
</feature>
<feature type="domain" description="Fibrinogen C-terminal" evidence="3">
    <location>
        <begin position="32"/>
        <end position="255"/>
    </location>
</feature>
<feature type="binding site" evidence="11 17 18">
    <location>
        <position position="86"/>
    </location>
    <ligand>
        <name>Ca(2+)</name>
        <dbReference type="ChEBI" id="CHEBI:29108"/>
        <label>1</label>
    </ligand>
</feature>
<feature type="binding site" evidence="11 17 18">
    <location>
        <position position="87"/>
    </location>
    <ligand>
        <name>Ca(2+)</name>
        <dbReference type="ChEBI" id="CHEBI:29108"/>
        <label>2</label>
    </ligand>
</feature>
<feature type="binding site" evidence="11 17 18">
    <location>
        <position position="89"/>
    </location>
    <ligand>
        <name>Ca(2+)</name>
        <dbReference type="ChEBI" id="CHEBI:29108"/>
        <label>2</label>
    </ligand>
</feature>
<feature type="binding site" evidence="11 17 18">
    <location>
        <position position="92"/>
    </location>
    <ligand>
        <name>Ca(2+)</name>
        <dbReference type="ChEBI" id="CHEBI:29108"/>
        <label>2</label>
    </ligand>
</feature>
<feature type="binding site" evidence="11 17 18">
    <location>
        <position position="97"/>
    </location>
    <ligand>
        <name>Ca(2+)</name>
        <dbReference type="ChEBI" id="CHEBI:29108"/>
        <label>1</label>
    </ligand>
</feature>
<feature type="binding site" evidence="11 17 18">
    <location>
        <position position="98"/>
    </location>
    <ligand>
        <name>Ca(2+)</name>
        <dbReference type="ChEBI" id="CHEBI:29108"/>
        <label>2</label>
    </ligand>
</feature>
<feature type="binding site" evidence="11 17 18">
    <location>
        <position position="133"/>
    </location>
    <ligand>
        <name>Ca(2+)</name>
        <dbReference type="ChEBI" id="CHEBI:29108"/>
        <label>1</label>
    </ligand>
</feature>
<feature type="binding site" evidence="11 17 18">
    <location>
        <position position="260"/>
    </location>
    <ligand>
        <name>Ca(2+)</name>
        <dbReference type="ChEBI" id="CHEBI:29108"/>
        <label>3</label>
    </ligand>
</feature>
<feature type="binding site" evidence="11 18">
    <location>
        <begin position="262"/>
        <end position="263"/>
    </location>
    <ligand>
        <name>a carbohydrate</name>
        <dbReference type="ChEBI" id="CHEBI:16646"/>
    </ligand>
</feature>
<feature type="binding site" evidence="11 17 18">
    <location>
        <position position="262"/>
    </location>
    <ligand>
        <name>Ca(2+)</name>
        <dbReference type="ChEBI" id="CHEBI:29108"/>
        <label>3</label>
    </ligand>
</feature>
<feature type="binding site" evidence="11 18">
    <location>
        <position position="274"/>
    </location>
    <ligand>
        <name>a carbohydrate</name>
        <dbReference type="ChEBI" id="CHEBI:16646"/>
    </ligand>
</feature>
<feature type="binding site" evidence="11 17 18">
    <location>
        <position position="274"/>
    </location>
    <ligand>
        <name>Ca(2+)</name>
        <dbReference type="ChEBI" id="CHEBI:29108"/>
        <label>3</label>
    </ligand>
</feature>
<feature type="binding site" evidence="11 17 18">
    <location>
        <position position="282"/>
    </location>
    <ligand>
        <name>Ca(2+)</name>
        <dbReference type="ChEBI" id="CHEBI:29108"/>
        <label>1</label>
    </ligand>
</feature>
<feature type="lipid moiety-binding region" description="GPI-anchor amidated serine" evidence="2">
    <location>
        <position position="298"/>
    </location>
</feature>
<feature type="glycosylation site" description="N-linked (GlcNAc...) asparagine" evidence="15">
    <location>
        <position position="163"/>
    </location>
</feature>
<feature type="disulfide bond" description="Interchain (with C-48)" evidence="3 9 11 17 18">
    <location>
        <position position="31"/>
    </location>
</feature>
<feature type="disulfide bond" evidence="11 17 18">
    <location>
        <begin position="41"/>
        <end position="70"/>
    </location>
</feature>
<feature type="disulfide bond" description="Interchain (with C-31)" evidence="3 9 11 17 18">
    <location>
        <position position="48"/>
    </location>
</feature>
<feature type="disulfide bond" evidence="11 17 18">
    <location>
        <begin position="94"/>
        <end position="280"/>
    </location>
</feature>
<feature type="disulfide bond" evidence="11 17 18">
    <location>
        <begin position="199"/>
        <end position="259"/>
    </location>
</feature>
<feature type="disulfide bond" evidence="11 17 18">
    <location>
        <begin position="251"/>
        <end position="265"/>
    </location>
</feature>
<feature type="sequence variant" id="VAR_019924" description="In dbSNP:rs2274907." evidence="5">
    <original>V</original>
    <variation>D</variation>
    <location>
        <position position="109"/>
    </location>
</feature>
<feature type="sequence variant" id="VAR_019925" description="In dbSNP:rs8144." evidence="7 12">
    <original>R</original>
    <variation>P</variation>
    <location>
        <position position="313"/>
    </location>
</feature>
<feature type="mutagenesis site" description="Forms mainly monomers; when associated with S-48." evidence="9">
    <original>C</original>
    <variation>S</variation>
    <location>
        <position position="31"/>
    </location>
</feature>
<feature type="mutagenesis site" description="Forms mainly dimers. Forms mainly monomers; when associated with S-31." evidence="9">
    <original>C</original>
    <variation>S</variation>
    <location>
        <position position="48"/>
    </location>
</feature>
<feature type="helix" evidence="19">
    <location>
        <begin position="41"/>
        <end position="46"/>
    </location>
</feature>
<feature type="strand" evidence="19">
    <location>
        <begin position="53"/>
        <end position="59"/>
    </location>
</feature>
<feature type="strand" evidence="19">
    <location>
        <begin position="65"/>
        <end position="71"/>
    </location>
</feature>
<feature type="helix" evidence="19">
    <location>
        <begin position="74"/>
        <end position="76"/>
    </location>
</feature>
<feature type="strand" evidence="19">
    <location>
        <begin position="79"/>
        <end position="85"/>
    </location>
</feature>
<feature type="turn" evidence="19">
    <location>
        <begin position="111"/>
        <end position="114"/>
    </location>
</feature>
<feature type="helix" evidence="19">
    <location>
        <begin position="116"/>
        <end position="118"/>
    </location>
</feature>
<feature type="helix" evidence="19">
    <location>
        <begin position="126"/>
        <end position="128"/>
    </location>
</feature>
<feature type="turn" evidence="19">
    <location>
        <begin position="129"/>
        <end position="131"/>
    </location>
</feature>
<feature type="helix" evidence="19">
    <location>
        <begin position="138"/>
        <end position="141"/>
    </location>
</feature>
<feature type="strand" evidence="19">
    <location>
        <begin position="145"/>
        <end position="153"/>
    </location>
</feature>
<feature type="helix" evidence="19">
    <location>
        <begin position="158"/>
        <end position="160"/>
    </location>
</feature>
<feature type="helix" evidence="19">
    <location>
        <begin position="161"/>
        <end position="164"/>
    </location>
</feature>
<feature type="strand" evidence="19">
    <location>
        <begin position="166"/>
        <end position="170"/>
    </location>
</feature>
<feature type="helix" evidence="19">
    <location>
        <begin position="175"/>
        <end position="177"/>
    </location>
</feature>
<feature type="turn" evidence="19">
    <location>
        <begin position="178"/>
        <end position="180"/>
    </location>
</feature>
<feature type="helix" evidence="19">
    <location>
        <begin position="183"/>
        <end position="189"/>
    </location>
</feature>
<feature type="turn" evidence="19">
    <location>
        <begin position="199"/>
        <end position="202"/>
    </location>
</feature>
<feature type="strand" evidence="19">
    <location>
        <begin position="206"/>
        <end position="208"/>
    </location>
</feature>
<feature type="strand" evidence="19">
    <location>
        <begin position="210"/>
        <end position="214"/>
    </location>
</feature>
<feature type="helix" evidence="19">
    <location>
        <begin position="216"/>
        <end position="221"/>
    </location>
</feature>
<feature type="helix" evidence="19">
    <location>
        <begin position="225"/>
        <end position="228"/>
    </location>
</feature>
<feature type="strand" evidence="19">
    <location>
        <begin position="231"/>
        <end position="241"/>
    </location>
</feature>
<feature type="strand" evidence="19">
    <location>
        <begin position="247"/>
        <end position="256"/>
    </location>
</feature>
<feature type="helix" evidence="19">
    <location>
        <begin position="261"/>
        <end position="263"/>
    </location>
</feature>
<feature type="turn" evidence="19">
    <location>
        <begin position="274"/>
        <end position="279"/>
    </location>
</feature>
<feature type="turn" evidence="19">
    <location>
        <begin position="282"/>
        <end position="289"/>
    </location>
</feature>
<feature type="helix" evidence="19">
    <location>
        <begin position="301"/>
        <end position="304"/>
    </location>
</feature>
<feature type="strand" evidence="19">
    <location>
        <begin position="306"/>
        <end position="313"/>
    </location>
</feature>
<organism>
    <name type="scientific">Homo sapiens</name>
    <name type="common">Human</name>
    <dbReference type="NCBI Taxonomy" id="9606"/>
    <lineage>
        <taxon>Eukaryota</taxon>
        <taxon>Metazoa</taxon>
        <taxon>Chordata</taxon>
        <taxon>Craniata</taxon>
        <taxon>Vertebrata</taxon>
        <taxon>Euteleostomi</taxon>
        <taxon>Mammalia</taxon>
        <taxon>Eutheria</taxon>
        <taxon>Euarchontoglires</taxon>
        <taxon>Primates</taxon>
        <taxon>Haplorrhini</taxon>
        <taxon>Catarrhini</taxon>
        <taxon>Hominidae</taxon>
        <taxon>Homo</taxon>
    </lineage>
</organism>
<evidence type="ECO:0000250" key="1">
    <source>
        <dbReference type="UniProtKB" id="O88310"/>
    </source>
</evidence>
<evidence type="ECO:0000255" key="2"/>
<evidence type="ECO:0000255" key="3">
    <source>
        <dbReference type="PROSITE-ProRule" id="PRU00739"/>
    </source>
</evidence>
<evidence type="ECO:0000269" key="4">
    <source>
    </source>
</evidence>
<evidence type="ECO:0000269" key="5">
    <source>
    </source>
</evidence>
<evidence type="ECO:0000269" key="6">
    <source>
    </source>
</evidence>
<evidence type="ECO:0000269" key="7">
    <source>
    </source>
</evidence>
<evidence type="ECO:0000269" key="8">
    <source>
    </source>
</evidence>
<evidence type="ECO:0000269" key="9">
    <source>
    </source>
</evidence>
<evidence type="ECO:0000269" key="10">
    <source>
    </source>
</evidence>
<evidence type="ECO:0000269" key="11">
    <source>
    </source>
</evidence>
<evidence type="ECO:0000269" key="12">
    <source ref="6"/>
</evidence>
<evidence type="ECO:0000303" key="13">
    <source>
    </source>
</evidence>
<evidence type="ECO:0000303" key="14">
    <source>
    </source>
</evidence>
<evidence type="ECO:0000305" key="15"/>
<evidence type="ECO:0000305" key="16">
    <source>
    </source>
</evidence>
<evidence type="ECO:0007744" key="17">
    <source>
        <dbReference type="PDB" id="4WMQ"/>
    </source>
</evidence>
<evidence type="ECO:0007744" key="18">
    <source>
        <dbReference type="PDB" id="4WMY"/>
    </source>
</evidence>
<evidence type="ECO:0007829" key="19">
    <source>
        <dbReference type="PDB" id="6USC"/>
    </source>
</evidence>
<dbReference type="EMBL" id="AF271386">
    <property type="protein sequence ID" value="AAM20741.1"/>
    <property type="molecule type" value="mRNA"/>
</dbReference>
<dbReference type="EMBL" id="AY065972">
    <property type="protein sequence ID" value="AAL58073.1"/>
    <property type="molecule type" value="mRNA"/>
</dbReference>
<dbReference type="EMBL" id="AB036706">
    <property type="protein sequence ID" value="BAA96094.1"/>
    <property type="molecule type" value="mRNA"/>
</dbReference>
<dbReference type="EMBL" id="AY157361">
    <property type="protein sequence ID" value="AAO17800.1"/>
    <property type="molecule type" value="mRNA"/>
</dbReference>
<dbReference type="EMBL" id="AY157362">
    <property type="protein sequence ID" value="AAO17801.1"/>
    <property type="molecule type" value="mRNA"/>
</dbReference>
<dbReference type="EMBL" id="AY549722">
    <property type="protein sequence ID" value="AAS49907.1"/>
    <property type="molecule type" value="mRNA"/>
</dbReference>
<dbReference type="EMBL" id="AY619692">
    <property type="protein sequence ID" value="AAU88048.1"/>
    <property type="molecule type" value="mRNA"/>
</dbReference>
<dbReference type="EMBL" id="AY358359">
    <property type="protein sequence ID" value="AAQ88725.1"/>
    <property type="molecule type" value="mRNA"/>
</dbReference>
<dbReference type="EMBL" id="AK000029">
    <property type="protein sequence ID" value="BAA90893.1"/>
    <property type="molecule type" value="mRNA"/>
</dbReference>
<dbReference type="EMBL" id="CR457224">
    <property type="protein sequence ID" value="CAG33505.1"/>
    <property type="molecule type" value="mRNA"/>
</dbReference>
<dbReference type="EMBL" id="AL354714">
    <property type="status" value="NOT_ANNOTATED_CDS"/>
    <property type="molecule type" value="Genomic_DNA"/>
</dbReference>
<dbReference type="EMBL" id="CH471121">
    <property type="protein sequence ID" value="EAW52690.1"/>
    <property type="molecule type" value="Genomic_DNA"/>
</dbReference>
<dbReference type="EMBL" id="BC020664">
    <property type="protein sequence ID" value="AAH20664.1"/>
    <property type="molecule type" value="mRNA"/>
</dbReference>
<dbReference type="CCDS" id="CCDS1211.1"/>
<dbReference type="RefSeq" id="NP_060095.2">
    <property type="nucleotide sequence ID" value="NM_017625.2"/>
</dbReference>
<dbReference type="PDB" id="4WMQ">
    <property type="method" value="X-ray"/>
    <property type="resolution" value="1.80 A"/>
    <property type="chains" value="A/B=29-313"/>
</dbReference>
<dbReference type="PDB" id="4WMY">
    <property type="method" value="X-ray"/>
    <property type="resolution" value="1.60 A"/>
    <property type="chains" value="A/B=29-313"/>
</dbReference>
<dbReference type="PDB" id="6USC">
    <property type="method" value="X-ray"/>
    <property type="resolution" value="1.59 A"/>
    <property type="chains" value="A/B=35-313"/>
</dbReference>
<dbReference type="PDBsum" id="4WMQ"/>
<dbReference type="PDBsum" id="4WMY"/>
<dbReference type="PDBsum" id="6USC"/>
<dbReference type="SMR" id="Q8WWA0"/>
<dbReference type="BioGRID" id="120741">
    <property type="interactions" value="71"/>
</dbReference>
<dbReference type="DIP" id="DIP-61704N"/>
<dbReference type="FunCoup" id="Q8WWA0">
    <property type="interactions" value="7"/>
</dbReference>
<dbReference type="IntAct" id="Q8WWA0">
    <property type="interactions" value="54"/>
</dbReference>
<dbReference type="STRING" id="9606.ENSP00000323587"/>
<dbReference type="UniLectin" id="Q8WWA0"/>
<dbReference type="GlyCosmos" id="Q8WWA0">
    <property type="glycosylation" value="1 site, No reported glycans"/>
</dbReference>
<dbReference type="GlyGen" id="Q8WWA0">
    <property type="glycosylation" value="3 sites"/>
</dbReference>
<dbReference type="iPTMnet" id="Q8WWA0"/>
<dbReference type="PhosphoSitePlus" id="Q8WWA0"/>
<dbReference type="BioMuta" id="ITLN1"/>
<dbReference type="DMDM" id="55976553"/>
<dbReference type="MassIVE" id="Q8WWA0"/>
<dbReference type="PaxDb" id="9606-ENSP00000323587"/>
<dbReference type="PeptideAtlas" id="Q8WWA0"/>
<dbReference type="ProteomicsDB" id="74869"/>
<dbReference type="Antibodypedia" id="47062">
    <property type="antibodies" value="344 antibodies from 35 providers"/>
</dbReference>
<dbReference type="DNASU" id="55600"/>
<dbReference type="Ensembl" id="ENST00000326245.4">
    <property type="protein sequence ID" value="ENSP00000323587.3"/>
    <property type="gene ID" value="ENSG00000179914.5"/>
</dbReference>
<dbReference type="GeneID" id="55600"/>
<dbReference type="KEGG" id="hsa:55600"/>
<dbReference type="MANE-Select" id="ENST00000326245.4">
    <property type="protein sequence ID" value="ENSP00000323587.3"/>
    <property type="RefSeq nucleotide sequence ID" value="NM_017625.3"/>
    <property type="RefSeq protein sequence ID" value="NP_060095.2"/>
</dbReference>
<dbReference type="UCSC" id="uc001fxc.4">
    <property type="organism name" value="human"/>
</dbReference>
<dbReference type="AGR" id="HGNC:18259"/>
<dbReference type="CTD" id="55600"/>
<dbReference type="DisGeNET" id="55600"/>
<dbReference type="GeneCards" id="ITLN1"/>
<dbReference type="HGNC" id="HGNC:18259">
    <property type="gene designation" value="ITLN1"/>
</dbReference>
<dbReference type="HPA" id="ENSG00000179914">
    <property type="expression patterns" value="Group enriched (adipose tissue, intestine)"/>
</dbReference>
<dbReference type="MIM" id="609873">
    <property type="type" value="gene"/>
</dbReference>
<dbReference type="neXtProt" id="NX_Q8WWA0"/>
<dbReference type="OpenTargets" id="ENSG00000179914"/>
<dbReference type="PharmGKB" id="PA134870726"/>
<dbReference type="VEuPathDB" id="HostDB:ENSG00000179914"/>
<dbReference type="eggNOG" id="ENOG502QU6C">
    <property type="taxonomic scope" value="Eukaryota"/>
</dbReference>
<dbReference type="GeneTree" id="ENSGT00940000154757"/>
<dbReference type="HOGENOM" id="CLU_066147_0_0_1"/>
<dbReference type="InParanoid" id="Q8WWA0"/>
<dbReference type="OMA" id="EIKDECP"/>
<dbReference type="OrthoDB" id="5971203at2759"/>
<dbReference type="PAN-GO" id="Q8WWA0">
    <property type="GO annotations" value="2 GO annotations based on evolutionary models"/>
</dbReference>
<dbReference type="PhylomeDB" id="Q8WWA0"/>
<dbReference type="TreeFam" id="TF328530"/>
<dbReference type="PathwayCommons" id="Q8WWA0"/>
<dbReference type="Reactome" id="R-HSA-6803157">
    <property type="pathway name" value="Antimicrobial peptides"/>
</dbReference>
<dbReference type="SignaLink" id="Q8WWA0"/>
<dbReference type="SIGNOR" id="Q8WWA0"/>
<dbReference type="BioGRID-ORCS" id="55600">
    <property type="hits" value="5 hits in 1148 CRISPR screens"/>
</dbReference>
<dbReference type="ChiTaRS" id="ITLN1">
    <property type="organism name" value="human"/>
</dbReference>
<dbReference type="EvolutionaryTrace" id="Q8WWA0"/>
<dbReference type="GeneWiki" id="ITLN1"/>
<dbReference type="GenomeRNAi" id="55600"/>
<dbReference type="Pharos" id="Q8WWA0">
    <property type="development level" value="Tbio"/>
</dbReference>
<dbReference type="PRO" id="PR:Q8WWA0"/>
<dbReference type="Proteomes" id="UP000005640">
    <property type="component" value="Chromosome 1"/>
</dbReference>
<dbReference type="RNAct" id="Q8WWA0">
    <property type="molecule type" value="protein"/>
</dbReference>
<dbReference type="Bgee" id="ENSG00000179914">
    <property type="expression patterns" value="Expressed in parietal pleura and 108 other cell types or tissues"/>
</dbReference>
<dbReference type="GO" id="GO:0031526">
    <property type="term" value="C:brush border membrane"/>
    <property type="evidence" value="ECO:0000250"/>
    <property type="project" value="UniProtKB"/>
</dbReference>
<dbReference type="GO" id="GO:0070062">
    <property type="term" value="C:extracellular exosome"/>
    <property type="evidence" value="ECO:0007005"/>
    <property type="project" value="UniProtKB"/>
</dbReference>
<dbReference type="GO" id="GO:0005576">
    <property type="term" value="C:extracellular region"/>
    <property type="evidence" value="ECO:0000304"/>
    <property type="project" value="Reactome"/>
</dbReference>
<dbReference type="GO" id="GO:0005615">
    <property type="term" value="C:extracellular space"/>
    <property type="evidence" value="ECO:0000318"/>
    <property type="project" value="GO_Central"/>
</dbReference>
<dbReference type="GO" id="GO:0045121">
    <property type="term" value="C:membrane raft"/>
    <property type="evidence" value="ECO:0000250"/>
    <property type="project" value="UniProtKB"/>
</dbReference>
<dbReference type="GO" id="GO:0043235">
    <property type="term" value="C:receptor complex"/>
    <property type="evidence" value="ECO:0000314"/>
    <property type="project" value="MGI"/>
</dbReference>
<dbReference type="GO" id="GO:0098552">
    <property type="term" value="C:side of membrane"/>
    <property type="evidence" value="ECO:0007669"/>
    <property type="project" value="UniProtKB-KW"/>
</dbReference>
<dbReference type="GO" id="GO:0005509">
    <property type="term" value="F:calcium ion binding"/>
    <property type="evidence" value="ECO:0000314"/>
    <property type="project" value="UniProtKB"/>
</dbReference>
<dbReference type="GO" id="GO:0042802">
    <property type="term" value="F:identical protein binding"/>
    <property type="evidence" value="ECO:0000353"/>
    <property type="project" value="IntAct"/>
</dbReference>
<dbReference type="GO" id="GO:0070492">
    <property type="term" value="F:oligosaccharide binding"/>
    <property type="evidence" value="ECO:0000314"/>
    <property type="project" value="UniProtKB"/>
</dbReference>
<dbReference type="GO" id="GO:0046326">
    <property type="term" value="P:positive regulation of D-glucose import"/>
    <property type="evidence" value="ECO:0000314"/>
    <property type="project" value="UniProtKB"/>
</dbReference>
<dbReference type="GO" id="GO:0001934">
    <property type="term" value="P:positive regulation of protein phosphorylation"/>
    <property type="evidence" value="ECO:0000314"/>
    <property type="project" value="UniProtKB"/>
</dbReference>
<dbReference type="GO" id="GO:0070207">
    <property type="term" value="P:protein homotrimerization"/>
    <property type="evidence" value="ECO:0000314"/>
    <property type="project" value="UniProtKB"/>
</dbReference>
<dbReference type="GO" id="GO:0009624">
    <property type="term" value="P:response to nematode"/>
    <property type="evidence" value="ECO:0000250"/>
    <property type="project" value="UniProtKB"/>
</dbReference>
<dbReference type="FunFam" id="3.90.215.10:FF:000011">
    <property type="entry name" value="Intelectin 1"/>
    <property type="match status" value="1"/>
</dbReference>
<dbReference type="Gene3D" id="3.90.215.10">
    <property type="entry name" value="Gamma Fibrinogen, chain A, domain 1"/>
    <property type="match status" value="1"/>
</dbReference>
<dbReference type="InterPro" id="IPR036056">
    <property type="entry name" value="Fibrinogen-like_C"/>
</dbReference>
<dbReference type="InterPro" id="IPR014716">
    <property type="entry name" value="Fibrinogen_a/b/g_C_1"/>
</dbReference>
<dbReference type="InterPro" id="IPR002181">
    <property type="entry name" value="Fibrinogen_a/b/g_C_dom"/>
</dbReference>
<dbReference type="NCBIfam" id="NF040941">
    <property type="entry name" value="GGGWT_bact"/>
    <property type="match status" value="1"/>
</dbReference>
<dbReference type="PANTHER" id="PTHR16146">
    <property type="entry name" value="INTELECTIN"/>
    <property type="match status" value="1"/>
</dbReference>
<dbReference type="PANTHER" id="PTHR16146:SF38">
    <property type="entry name" value="INTELECTIN-1"/>
    <property type="match status" value="1"/>
</dbReference>
<dbReference type="SUPFAM" id="SSF56496">
    <property type="entry name" value="Fibrinogen C-terminal domain-like"/>
    <property type="match status" value="1"/>
</dbReference>
<dbReference type="PROSITE" id="PS51406">
    <property type="entry name" value="FIBRINOGEN_C_2"/>
    <property type="match status" value="1"/>
</dbReference>
<accession>Q8WWA0</accession>
<accession>Q5IWS4</accession>
<accession>Q5VYI4</accession>
<accession>Q6YDJ3</accession>
<accession>Q9NP67</accession>
<gene>
    <name type="primary">ITLN1</name>
    <name type="synonym">INTL</name>
    <name type="synonym">ITLN</name>
    <name type="synonym">LFR</name>
    <name type="ORF">UNQ640/PRO1270</name>
</gene>
<comment type="function">
    <text evidence="5 8 10 11 15 16">Lectin that specifically recognizes microbial carbohydrate chains in a calcium-dependent manner (PubMed:11313366, PubMed:26148048). Binds to microbial glycans that contain a terminal acyclic 1,2-diol moiety, including beta-linked D-galactofuranose (beta-Galf), D-phosphoglycerol-modified glycans, D-glycero-D-talo-oct-2-ulosonic acid (KO) and 3-deoxy-D-manno-oct-2-ulosonic acid (KDO) (PubMed:26148048). Binds to glycans from Gram-positive and Gram-negative bacteria, including K.pneumoniae, S.pneumoniae, Y.pestis, P.mirabilis and P.vulgaris (PubMed:26148048). Does not bind human glycans (PubMed:26148048). Probably plays a role in the defense system against microorganisms (Probable). May function as adipokine that has no effect on basal glucose uptake but enhances insulin-stimulated glucose uptake in adipocytes (PubMed:16531507). Increases AKT phosphorylation in the absence and presence of insulin (PubMed:16531507). May interact with lactoferrin/LTF and increase its uptake, and may thereby play a role in iron absorption (PubMed:11747454, PubMed:23921499).</text>
</comment>
<comment type="subunit">
    <text evidence="5 6 9 10 11">Homotrimer; disulfide-linked (PubMed:11313366, PubMed:17621593, PubMed:26148048). May interact with LTF (PubMed:11747454, PubMed:23921499).</text>
</comment>
<comment type="interaction">
    <interactant intactId="EBI-16163679">
        <id>Q8WWA0</id>
    </interactant>
    <interactant intactId="EBI-16163679">
        <id>Q8WWA0</id>
        <label>ITLN1</label>
    </interactant>
    <organismsDiffer>false</organismsDiffer>
    <experiments>2</experiments>
</comment>
<comment type="interaction">
    <interactant intactId="EBI-16163679">
        <id>Q8WWA0</id>
    </interactant>
    <interactant intactId="EBI-13301303">
        <id>Q6UWW9</id>
        <label>TMEM207</label>
    </interactant>
    <organismsDiffer>false</organismsDiffer>
    <experiments>2</experiments>
</comment>
<comment type="subcellular location">
    <subcellularLocation>
        <location evidence="16">Cell membrane</location>
        <topology evidence="16">Lipid-anchor</topology>
        <topology evidence="16">GPI-anchor</topology>
    </subcellularLocation>
    <subcellularLocation>
        <location evidence="5 8 16">Secreted</location>
    </subcellularLocation>
    <text evidence="1">Enriched in lipid rafts.</text>
</comment>
<comment type="tissue specificity">
    <text evidence="4 5 6 8">Highly expressed in omental adipose tissue where it is found in stromal vascular cells but not in fat cells but is barely detectable in subcutaneous adipose tissue (at protein level) (PubMed:16531507). Highly expressed in the small intestine. Also found in the heart, testis, colon, salivary gland, skeletal muscle, pancreas and thyroid and, to a lesser degree, in the uterus, spleen, prostate, lymph node and thymus.</text>
</comment>
<comment type="developmental stage">
    <text>Found in fetal small intestine and thymus.</text>
</comment>
<comment type="PTM">
    <text evidence="5 9">N-glycosylated.</text>
</comment>
<comment type="mass spectrometry" mass="35500.0" method="MALDI" evidence="9"/>
<sequence length="313" mass="34962">MNQLSFLLFLIATTRGWSTDEANTYFKEWTCSSSPSLPRSCKEIKDECPSAFDGLYFLRTENGVIYQTFCDMTSGGGGWTLVASVHENDMRGKCTVGDRWSSQQGSKAVYPEGDGNWANYNTFGSAEAATSDDYKNPGYYDIQAKDLGIWHVPNKSPMQHWRNSSLLRYRTDTGFLQTLGHNLFGIYQKYPVKYGEGKCWTDNGPVIPVVYDFGDAQKTASYYSPYGQREFTAGFVQFRVFNNERAANALCAGMRVTGCNTEHHCIGGGGYFPEASPQQCGDFSGFDWSGYGTHVGYSSSREITEAAVLLFYR</sequence>
<name>ITLN1_HUMAN</name>
<proteinExistence type="evidence at protein level"/>